<name>DABA1_NITWN</name>
<sequence length="1037" mass="116947">MVDALNLGRRLRVRSTAYVAGEPVPFFWPMRTFIHHNPLYGLEDMPFEQAVRRGAELFHARMFLPRSDYQRWQREGKVRPETLKEEIGRRSQDLPPVPGVDWPRWLHALMQTPHDRDAVVRGVRAKDVHAALHGHPPSAQAVDVAALLPELEQRLHARTLPEAVDALWGTGLADELDELVIKNCLDFFDEDQSAWRMPGRERGLFSAWSEVTRRNARMVLRRLHVRHILDHVQDAESAVVYVMEEMGIGAEAWPTYFTRVLTRLHGWTGFVRWRASAKHYYWAQQYPADIVDLLAIRLVMGLALLQESARHRGTPMRRDDLGAVVRERGAECVLRYALHSGEVLPDWAQRIDDTLSRGNGARCHDLLQRYWPLWQARLGQQQAAALRELAAAANATAALDALAPEDVEGLLQGLRDFAPQEGMVWTLAMEGQAIDKLLTQVQAPQDPPPDKIPFAQAWFCIDVRAEPIRRHLERVGNYQTFGIAGFFGVPVGFLGYGKGSESHYCPAVITPKNLVLELPAALDPHNEDFVSTLGHVLHDLKKSVLSPYVTVEAVGMLFGLDLFGKTLAPLGYSRWRRRIDTEKPVTRLLVDKLSREQADSIIRTLQRAMIVKALHTELKIERERVDDDMIRELREIALRRRDGPTRLRTTFGVPQTQEAEFIDKLRQVYGVDADYTNHQLERLGRIGYSLDEQVNYVHTALTMIGLTQTFSRFVLVVGHGGKTENNPYESALDCGACGGASGIVNARVFAQMANKPAVRERLAAMGITIPEDTWFMPALHVTTTDAIELFDLDLLPPRHLVYLERLRDGLRAASRLTAAERMPKLLPEAKALEPAEALRLANRLAVDWAQVRPEWGLSGNVYGIVGRRALTENSDLQGSAFLLSYDWRCDPRGRLLENLLAAPVVVGQWINLEHFFSTVDNAHLGSGSKVYHNVSGRFGVMTGSLSDLRTGLPMQTVMREGRPYHEPMRLIALIEAPLDFAGRVLERVVKVKSLVLGGWIRAIVIDPTQGYKPFVFNNGQWEERTPLIAPAEKEYSA</sequence>
<keyword id="KW-0997">Cell inner membrane</keyword>
<keyword id="KW-1003">Cell membrane</keyword>
<keyword id="KW-0472">Membrane</keyword>
<keyword id="KW-0479">Metal-binding</keyword>
<keyword id="KW-1185">Reference proteome</keyword>
<keyword id="KW-0813">Transport</keyword>
<keyword id="KW-0862">Zinc</keyword>
<reference key="1">
    <citation type="journal article" date="2006" name="Appl. Environ. Microbiol.">
        <title>Genome sequence of the chemolithoautotrophic nitrite-oxidizing bacterium Nitrobacter winogradskyi Nb-255.</title>
        <authorList>
            <person name="Starkenburg S.R."/>
            <person name="Chain P.S.G."/>
            <person name="Sayavedra-Soto L.A."/>
            <person name="Hauser L."/>
            <person name="Land M.L."/>
            <person name="Larimer F.W."/>
            <person name="Malfatti S.A."/>
            <person name="Klotz M.G."/>
            <person name="Bottomley P.J."/>
            <person name="Arp D.J."/>
            <person name="Hickey W.J."/>
        </authorList>
    </citation>
    <scope>NUCLEOTIDE SEQUENCE [LARGE SCALE GENOMIC DNA]</scope>
    <source>
        <strain>ATCC 25391 / DSM 10237 / CIP 104748 / NCIMB 11846 / Nb-255</strain>
    </source>
</reference>
<feature type="chain" id="PRO_0000387281" description="Probable inorganic carbon transporter subunit DabA 1">
    <location>
        <begin position="1"/>
        <end position="1037"/>
    </location>
</feature>
<feature type="binding site" evidence="1">
    <location>
        <position position="460"/>
    </location>
    <ligand>
        <name>Zn(2+)</name>
        <dbReference type="ChEBI" id="CHEBI:29105"/>
    </ligand>
</feature>
<feature type="binding site" evidence="1">
    <location>
        <position position="462"/>
    </location>
    <ligand>
        <name>Zn(2+)</name>
        <dbReference type="ChEBI" id="CHEBI:29105"/>
    </ligand>
</feature>
<feature type="binding site" evidence="1">
    <location>
        <position position="719"/>
    </location>
    <ligand>
        <name>Zn(2+)</name>
        <dbReference type="ChEBI" id="CHEBI:29105"/>
    </ligand>
</feature>
<feature type="binding site" evidence="1">
    <location>
        <position position="734"/>
    </location>
    <ligand>
        <name>Zn(2+)</name>
        <dbReference type="ChEBI" id="CHEBI:29105"/>
    </ligand>
</feature>
<protein>
    <recommendedName>
        <fullName evidence="1">Probable inorganic carbon transporter subunit DabA 1</fullName>
    </recommendedName>
</protein>
<comment type="function">
    <text evidence="1">Part of an energy-coupled inorganic carbon pump.</text>
</comment>
<comment type="cofactor">
    <cofactor evidence="1">
        <name>Zn(2+)</name>
        <dbReference type="ChEBI" id="CHEBI:29105"/>
    </cofactor>
</comment>
<comment type="subunit">
    <text evidence="1">Forms a complex with DabB.</text>
</comment>
<comment type="subcellular location">
    <subcellularLocation>
        <location evidence="1">Cell inner membrane</location>
        <topology evidence="1">Peripheral membrane protein</topology>
    </subcellularLocation>
</comment>
<comment type="similarity">
    <text evidence="1">Belongs to the inorganic carbon transporter (TC 9.A.2) DabA family.</text>
</comment>
<proteinExistence type="inferred from homology"/>
<evidence type="ECO:0000255" key="1">
    <source>
        <dbReference type="HAMAP-Rule" id="MF_01871"/>
    </source>
</evidence>
<gene>
    <name evidence="1" type="primary">dabA1</name>
    <name type="ordered locus">Nwi_1990</name>
</gene>
<dbReference type="EMBL" id="CP000115">
    <property type="protein sequence ID" value="ABA05249.1"/>
    <property type="molecule type" value="Genomic_DNA"/>
</dbReference>
<dbReference type="STRING" id="323098.Nwi_1990"/>
<dbReference type="KEGG" id="nwi:Nwi_1990"/>
<dbReference type="eggNOG" id="COG3002">
    <property type="taxonomic scope" value="Bacteria"/>
</dbReference>
<dbReference type="HOGENOM" id="CLU_009885_0_0_5"/>
<dbReference type="OrthoDB" id="9805101at2"/>
<dbReference type="Proteomes" id="UP000002531">
    <property type="component" value="Chromosome"/>
</dbReference>
<dbReference type="GO" id="GO:0005886">
    <property type="term" value="C:plasma membrane"/>
    <property type="evidence" value="ECO:0007669"/>
    <property type="project" value="UniProtKB-SubCell"/>
</dbReference>
<dbReference type="GO" id="GO:0008270">
    <property type="term" value="F:zinc ion binding"/>
    <property type="evidence" value="ECO:0007669"/>
    <property type="project" value="UniProtKB-UniRule"/>
</dbReference>
<dbReference type="HAMAP" id="MF_01871">
    <property type="entry name" value="DabA"/>
    <property type="match status" value="1"/>
</dbReference>
<dbReference type="InterPro" id="IPR018752">
    <property type="entry name" value="DabA"/>
</dbReference>
<dbReference type="PANTHER" id="PTHR38344:SF1">
    <property type="entry name" value="INORGANIC CARBON TRANSPORTER SUBUNIT DABA-RELATED"/>
    <property type="match status" value="1"/>
</dbReference>
<dbReference type="PANTHER" id="PTHR38344">
    <property type="entry name" value="UPF0753 PROTEIN AQ_863"/>
    <property type="match status" value="1"/>
</dbReference>
<dbReference type="Pfam" id="PF10070">
    <property type="entry name" value="DabA"/>
    <property type="match status" value="1"/>
</dbReference>
<accession>Q3SR42</accession>
<organism>
    <name type="scientific">Nitrobacter winogradskyi (strain ATCC 25391 / DSM 10237 / CIP 104748 / NCIMB 11846 / Nb-255)</name>
    <dbReference type="NCBI Taxonomy" id="323098"/>
    <lineage>
        <taxon>Bacteria</taxon>
        <taxon>Pseudomonadati</taxon>
        <taxon>Pseudomonadota</taxon>
        <taxon>Alphaproteobacteria</taxon>
        <taxon>Hyphomicrobiales</taxon>
        <taxon>Nitrobacteraceae</taxon>
        <taxon>Nitrobacter</taxon>
    </lineage>
</organism>